<keyword id="KW-1185">Reference proteome</keyword>
<keyword id="KW-0687">Ribonucleoprotein</keyword>
<keyword id="KW-0689">Ribosomal protein</keyword>
<proteinExistence type="inferred from homology"/>
<reference key="1">
    <citation type="journal article" date="2010" name="BMC Genomics">
        <title>Complete genome sequence and lifestyle of black-pigmented Corynebacterium aurimucosum ATCC 700975 (formerly C. nigricans CN-1) isolated from a vaginal swab of a woman with spontaneous abortion.</title>
        <authorList>
            <person name="Trost E."/>
            <person name="Gotker S."/>
            <person name="Schneider J."/>
            <person name="Schneiker-Bekel S."/>
            <person name="Szczepanowski R."/>
            <person name="Tilker A."/>
            <person name="Viehoever P."/>
            <person name="Arnold W."/>
            <person name="Bekel T."/>
            <person name="Blom J."/>
            <person name="Gartemann K.H."/>
            <person name="Linke B."/>
            <person name="Goesmann A."/>
            <person name="Puhler A."/>
            <person name="Shukla S.K."/>
            <person name="Tauch A."/>
        </authorList>
    </citation>
    <scope>NUCLEOTIDE SEQUENCE [LARGE SCALE GENOMIC DNA]</scope>
    <source>
        <strain>ATCC 700975 / DSM 44827 / CIP 107346 / CN-1</strain>
    </source>
</reference>
<organism>
    <name type="scientific">Corynebacterium aurimucosum (strain ATCC 700975 / DSM 44827 / CIP 107346 / CN-1)</name>
    <name type="common">Corynebacterium nigricans</name>
    <dbReference type="NCBI Taxonomy" id="548476"/>
    <lineage>
        <taxon>Bacteria</taxon>
        <taxon>Bacillati</taxon>
        <taxon>Actinomycetota</taxon>
        <taxon>Actinomycetes</taxon>
        <taxon>Mycobacteriales</taxon>
        <taxon>Corynebacteriaceae</taxon>
        <taxon>Corynebacterium</taxon>
    </lineage>
</organism>
<feature type="chain" id="PRO_1000195969" description="Large ribosomal subunit protein bL32">
    <location>
        <begin position="1"/>
        <end position="57"/>
    </location>
</feature>
<feature type="region of interest" description="Disordered" evidence="2">
    <location>
        <begin position="1"/>
        <end position="20"/>
    </location>
</feature>
<feature type="compositionally biased region" description="Basic residues" evidence="2">
    <location>
        <begin position="1"/>
        <end position="19"/>
    </location>
</feature>
<name>RL32_CORA7</name>
<gene>
    <name evidence="1" type="primary">rpmF</name>
    <name type="ordered locus">cauri_0824</name>
</gene>
<comment type="similarity">
    <text evidence="1">Belongs to the bacterial ribosomal protein bL32 family.</text>
</comment>
<sequence>MATPKFKKSRANTHSRRSQWKADNVALQEVTIDGQTVRIPRRLVKAAKLGLVDVEQF</sequence>
<accession>C3PF17</accession>
<evidence type="ECO:0000255" key="1">
    <source>
        <dbReference type="HAMAP-Rule" id="MF_00340"/>
    </source>
</evidence>
<evidence type="ECO:0000256" key="2">
    <source>
        <dbReference type="SAM" id="MobiDB-lite"/>
    </source>
</evidence>
<evidence type="ECO:0000305" key="3"/>
<protein>
    <recommendedName>
        <fullName evidence="1">Large ribosomal subunit protein bL32</fullName>
    </recommendedName>
    <alternativeName>
        <fullName evidence="3">50S ribosomal protein L32</fullName>
    </alternativeName>
</protein>
<dbReference type="EMBL" id="CP001601">
    <property type="protein sequence ID" value="ACP32421.1"/>
    <property type="molecule type" value="Genomic_DNA"/>
</dbReference>
<dbReference type="RefSeq" id="WP_010187615.1">
    <property type="nucleotide sequence ID" value="NZ_ACLH01000014.1"/>
</dbReference>
<dbReference type="SMR" id="C3PF17"/>
<dbReference type="STRING" id="548476.cauri_0824"/>
<dbReference type="GeneID" id="82879909"/>
<dbReference type="KEGG" id="car:cauri_0824"/>
<dbReference type="eggNOG" id="ENOG5033AVR">
    <property type="taxonomic scope" value="Bacteria"/>
</dbReference>
<dbReference type="HOGENOM" id="CLU_203263_0_0_11"/>
<dbReference type="OrthoDB" id="9807363at2"/>
<dbReference type="Proteomes" id="UP000002077">
    <property type="component" value="Chromosome"/>
</dbReference>
<dbReference type="GO" id="GO:0015934">
    <property type="term" value="C:large ribosomal subunit"/>
    <property type="evidence" value="ECO:0007669"/>
    <property type="project" value="InterPro"/>
</dbReference>
<dbReference type="GO" id="GO:0003735">
    <property type="term" value="F:structural constituent of ribosome"/>
    <property type="evidence" value="ECO:0007669"/>
    <property type="project" value="InterPro"/>
</dbReference>
<dbReference type="GO" id="GO:0006412">
    <property type="term" value="P:translation"/>
    <property type="evidence" value="ECO:0007669"/>
    <property type="project" value="UniProtKB-UniRule"/>
</dbReference>
<dbReference type="HAMAP" id="MF_00340">
    <property type="entry name" value="Ribosomal_bL32"/>
    <property type="match status" value="1"/>
</dbReference>
<dbReference type="InterPro" id="IPR002677">
    <property type="entry name" value="Ribosomal_bL32"/>
</dbReference>
<dbReference type="InterPro" id="IPR011332">
    <property type="entry name" value="Ribosomal_zn-bd"/>
</dbReference>
<dbReference type="NCBIfam" id="TIGR01031">
    <property type="entry name" value="rpmF_bact"/>
    <property type="match status" value="1"/>
</dbReference>
<dbReference type="Pfam" id="PF01783">
    <property type="entry name" value="Ribosomal_L32p"/>
    <property type="match status" value="1"/>
</dbReference>
<dbReference type="SUPFAM" id="SSF57829">
    <property type="entry name" value="Zn-binding ribosomal proteins"/>
    <property type="match status" value="1"/>
</dbReference>